<evidence type="ECO:0000250" key="1"/>
<evidence type="ECO:0000255" key="2"/>
<evidence type="ECO:0000255" key="3">
    <source>
        <dbReference type="PROSITE-ProRule" id="PRU00143"/>
    </source>
</evidence>
<evidence type="ECO:0000256" key="4">
    <source>
        <dbReference type="SAM" id="MobiDB-lite"/>
    </source>
</evidence>
<evidence type="ECO:0000305" key="5"/>
<reference key="1">
    <citation type="journal article" date="2005" name="J. Bacteriol.">
        <title>Whole-genome sequence analysis of Pseudomonas syringae pv. phaseolicola 1448A reveals divergence among pathovars in genes involved in virulence and transposition.</title>
        <authorList>
            <person name="Joardar V."/>
            <person name="Lindeberg M."/>
            <person name="Jackson R.W."/>
            <person name="Selengut J."/>
            <person name="Dodson R."/>
            <person name="Brinkac L.M."/>
            <person name="Daugherty S.C."/>
            <person name="DeBoy R.T."/>
            <person name="Durkin A.S."/>
            <person name="Gwinn Giglio M."/>
            <person name="Madupu R."/>
            <person name="Nelson W.C."/>
            <person name="Rosovitz M.J."/>
            <person name="Sullivan S.A."/>
            <person name="Crabtree J."/>
            <person name="Creasy T."/>
            <person name="Davidsen T.M."/>
            <person name="Haft D.H."/>
            <person name="Zafar N."/>
            <person name="Zhou L."/>
            <person name="Halpin R."/>
            <person name="Holley T."/>
            <person name="Khouri H.M."/>
            <person name="Feldblyum T.V."/>
            <person name="White O."/>
            <person name="Fraser C.M."/>
            <person name="Chatterjee A.K."/>
            <person name="Cartinhour S."/>
            <person name="Schneider D."/>
            <person name="Mansfield J.W."/>
            <person name="Collmer A."/>
            <person name="Buell R."/>
        </authorList>
    </citation>
    <scope>NUCLEOTIDE SEQUENCE [LARGE SCALE GENOMIC DNA]</scope>
    <source>
        <strain>1448A / Race 6</strain>
    </source>
</reference>
<protein>
    <recommendedName>
        <fullName>Probable periplasmic serine endoprotease DegP-like</fullName>
        <ecNumber>3.4.21.107</ecNumber>
    </recommendedName>
    <alternativeName>
        <fullName>Protease Do</fullName>
    </alternativeName>
</protein>
<proteinExistence type="inferred from homology"/>
<keyword id="KW-0378">Hydrolase</keyword>
<keyword id="KW-0574">Periplasm</keyword>
<keyword id="KW-0645">Protease</keyword>
<keyword id="KW-0677">Repeat</keyword>
<keyword id="KW-0720">Serine protease</keyword>
<keyword id="KW-0732">Signal</keyword>
<keyword id="KW-0346">Stress response</keyword>
<name>DEGPL_PSE14</name>
<accession>Q48EU9</accession>
<comment type="function">
    <text evidence="1">Might be efficient in the degradation of transiently denatured and unfolded proteins which accumulate in the periplasm following stress conditions.</text>
</comment>
<comment type="catalytic activity">
    <reaction>
        <text>Acts on substrates that are at least partially unfolded. The cleavage site P1 residue is normally between a pair of hydrophobic residues, such as Val-|-Val.</text>
        <dbReference type="EC" id="3.4.21.107"/>
    </reaction>
</comment>
<comment type="subcellular location">
    <subcellularLocation>
        <location evidence="5">Periplasm</location>
    </subcellularLocation>
</comment>
<comment type="similarity">
    <text evidence="5">Belongs to the peptidase S1C family.</text>
</comment>
<sequence>MSIPRMKSYFSLIAAVLMLGQVATAQAENLPDFTGLVEQASPAVVNISTRQKLPDRAIANQQMPDLEGLPPMLREFLERSMPPGSRPPGAGKGDRQRETQSLGSGFIISPDGYILTNNHVIDGADEILVRLSDRSELKAKLIGTDSRTDVAVLKIDGKDLPTAKLGNSNTLKVGEWVLAIGSPFGFDHSVTKGIVSAKGRSLPNDTYVPFIQTDVAINPGNSGGPLFNMAGEVVGINSQIFTRSGGFMGLSFAIPIDVAMDVANQLKASGKVSRGWLGVVIQEVNKDLAESFGLDKPAGALVAQVLEDGPAAKGGLQVGDVILSANGQPIIMSADLPHLIGNLKDGSKAELEVIRDGKRQKLTVTVGALPDEGQEMGDVAGTGAERSSNRLGVSVIELTAEQKKSLDLKGGVAIKEVTGGPASLIGLQPGDVITHLNNQAITSSKQFTEVAKSLPKDRSVSMRVLRQGRATFITFKLSE</sequence>
<organism>
    <name type="scientific">Pseudomonas savastanoi pv. phaseolicola (strain 1448A / Race 6)</name>
    <name type="common">Pseudomonas syringae pv. phaseolicola (strain 1448A / Race 6)</name>
    <dbReference type="NCBI Taxonomy" id="264730"/>
    <lineage>
        <taxon>Bacteria</taxon>
        <taxon>Pseudomonadati</taxon>
        <taxon>Pseudomonadota</taxon>
        <taxon>Gammaproteobacteria</taxon>
        <taxon>Pseudomonadales</taxon>
        <taxon>Pseudomonadaceae</taxon>
        <taxon>Pseudomonas</taxon>
    </lineage>
</organism>
<feature type="signal peptide" evidence="2">
    <location>
        <begin position="1"/>
        <end position="27"/>
    </location>
</feature>
<feature type="chain" id="PRO_0000414224" description="Probable periplasmic serine endoprotease DegP-like">
    <location>
        <begin position="28"/>
        <end position="479"/>
    </location>
</feature>
<feature type="domain" description="PDZ 1" evidence="3">
    <location>
        <begin position="266"/>
        <end position="357"/>
    </location>
</feature>
<feature type="domain" description="PDZ 2" evidence="3">
    <location>
        <begin position="363"/>
        <end position="468"/>
    </location>
</feature>
<feature type="region of interest" description="Disordered" evidence="4">
    <location>
        <begin position="77"/>
        <end position="99"/>
    </location>
</feature>
<feature type="active site" description="Charge relay system" evidence="1">
    <location>
        <position position="119"/>
    </location>
</feature>
<feature type="active site" description="Charge relay system" evidence="2">
    <location>
        <position position="149"/>
    </location>
</feature>
<feature type="active site" description="Charge relay system" evidence="1">
    <location>
        <position position="222"/>
    </location>
</feature>
<feature type="binding site" evidence="1">
    <location>
        <begin position="220"/>
        <end position="222"/>
    </location>
    <ligand>
        <name>substrate</name>
    </ligand>
</feature>
<feature type="binding site" evidence="1">
    <location>
        <begin position="277"/>
        <end position="281"/>
    </location>
    <ligand>
        <name>substrate</name>
    </ligand>
</feature>
<dbReference type="EC" id="3.4.21.107"/>
<dbReference type="EMBL" id="CP000058">
    <property type="protein sequence ID" value="AAZ33488.1"/>
    <property type="molecule type" value="Genomic_DNA"/>
</dbReference>
<dbReference type="SMR" id="Q48EU9"/>
<dbReference type="MEROPS" id="S01.453"/>
<dbReference type="KEGG" id="psp:PSPPH_3952"/>
<dbReference type="eggNOG" id="COG0265">
    <property type="taxonomic scope" value="Bacteria"/>
</dbReference>
<dbReference type="HOGENOM" id="CLU_020120_1_0_6"/>
<dbReference type="Proteomes" id="UP000000551">
    <property type="component" value="Chromosome"/>
</dbReference>
<dbReference type="GO" id="GO:0042597">
    <property type="term" value="C:periplasmic space"/>
    <property type="evidence" value="ECO:0007669"/>
    <property type="project" value="UniProtKB-SubCell"/>
</dbReference>
<dbReference type="GO" id="GO:0004252">
    <property type="term" value="F:serine-type endopeptidase activity"/>
    <property type="evidence" value="ECO:0007669"/>
    <property type="project" value="InterPro"/>
</dbReference>
<dbReference type="GO" id="GO:0006508">
    <property type="term" value="P:proteolysis"/>
    <property type="evidence" value="ECO:0007669"/>
    <property type="project" value="UniProtKB-KW"/>
</dbReference>
<dbReference type="CDD" id="cd10839">
    <property type="entry name" value="cpPDZ1_DegP-like"/>
    <property type="match status" value="1"/>
</dbReference>
<dbReference type="FunFam" id="2.30.42.10:FF:000037">
    <property type="entry name" value="Periplasmic serine endoprotease DegP-like"/>
    <property type="match status" value="1"/>
</dbReference>
<dbReference type="FunFam" id="2.40.10.120:FF:000007">
    <property type="entry name" value="Periplasmic serine endoprotease DegP-like"/>
    <property type="match status" value="1"/>
</dbReference>
<dbReference type="Gene3D" id="2.30.42.10">
    <property type="match status" value="2"/>
</dbReference>
<dbReference type="Gene3D" id="2.40.10.120">
    <property type="match status" value="1"/>
</dbReference>
<dbReference type="InterPro" id="IPR001478">
    <property type="entry name" value="PDZ"/>
</dbReference>
<dbReference type="InterPro" id="IPR036034">
    <property type="entry name" value="PDZ_sf"/>
</dbReference>
<dbReference type="InterPro" id="IPR011782">
    <property type="entry name" value="Pept_S1C_Do"/>
</dbReference>
<dbReference type="InterPro" id="IPR009003">
    <property type="entry name" value="Peptidase_S1_PA"/>
</dbReference>
<dbReference type="InterPro" id="IPR001940">
    <property type="entry name" value="Peptidase_S1C"/>
</dbReference>
<dbReference type="NCBIfam" id="TIGR02037">
    <property type="entry name" value="degP_htrA_DO"/>
    <property type="match status" value="1"/>
</dbReference>
<dbReference type="PANTHER" id="PTHR22939">
    <property type="entry name" value="SERINE PROTEASE FAMILY S1C HTRA-RELATED"/>
    <property type="match status" value="1"/>
</dbReference>
<dbReference type="PANTHER" id="PTHR22939:SF129">
    <property type="entry name" value="SERINE PROTEASE HTRA2, MITOCHONDRIAL"/>
    <property type="match status" value="1"/>
</dbReference>
<dbReference type="Pfam" id="PF13180">
    <property type="entry name" value="PDZ_2"/>
    <property type="match status" value="2"/>
</dbReference>
<dbReference type="Pfam" id="PF13365">
    <property type="entry name" value="Trypsin_2"/>
    <property type="match status" value="1"/>
</dbReference>
<dbReference type="PRINTS" id="PR00834">
    <property type="entry name" value="PROTEASES2C"/>
</dbReference>
<dbReference type="SMART" id="SM00228">
    <property type="entry name" value="PDZ"/>
    <property type="match status" value="2"/>
</dbReference>
<dbReference type="SUPFAM" id="SSF50156">
    <property type="entry name" value="PDZ domain-like"/>
    <property type="match status" value="2"/>
</dbReference>
<dbReference type="SUPFAM" id="SSF50494">
    <property type="entry name" value="Trypsin-like serine proteases"/>
    <property type="match status" value="1"/>
</dbReference>
<dbReference type="PROSITE" id="PS50106">
    <property type="entry name" value="PDZ"/>
    <property type="match status" value="2"/>
</dbReference>
<gene>
    <name type="primary">mucD</name>
    <name type="ordered locus">PSPPH_3952</name>
</gene>